<gene>
    <name evidence="1" type="primary">fucI</name>
    <name type="ordered locus">spr1964</name>
</gene>
<sequence>MIQHPRIGIRPTIDGRRQGVRESLEVQTMNMAKSVADLISSTLKYPDGEPVECVISPSTIGRVPEAAASHELFKKSNVCATITVTPCWCYGSETMDMSPDIPHAIWGFNGTERPGAVYLAAVLASHAQKGIPAFGIYGRDVQEASDTAIPEDVKEKLLRYARAALATGLMRDTAYLSMGSVSMGIGGSIVNPDFFQEYLGMRNESVDMTEFTRRMDRGIYDPEEFERALKWVKENVKEGFDHNREDLVLSREEKDRQWEFVIKMFMIGRDLMVGNPRLAELGFEEEAVGHHALVAGFQGQRQWTDHFPNGDFMETFLNTQFDWNGIRKPFVFATENDSLNGVSMLFNYLLTNTPQIFADVRTYWSPEAVERVTGYTLEGRAAAGFLHLINSGSCTLDGTGQATRDGKPVMKPFWELDESEVQAMLENTDFPPANREYFRGGGFSTRFLTKGDMPVTMVRLNLLKGVGPVLQIAEGYTLELPEDVHHTLDNRTDPGWPTTWFAPRLTGKGAFKSVYDVMNNWGANHGAITYGHIGADLITLASMLRIPVNMHNVPEEDIFRPKNWSLFGTEDLESADYRACQLLGPLHK</sequence>
<accession>Q8DN24</accession>
<organism>
    <name type="scientific">Streptococcus pneumoniae (strain ATCC BAA-255 / R6)</name>
    <dbReference type="NCBI Taxonomy" id="171101"/>
    <lineage>
        <taxon>Bacteria</taxon>
        <taxon>Bacillati</taxon>
        <taxon>Bacillota</taxon>
        <taxon>Bacilli</taxon>
        <taxon>Lactobacillales</taxon>
        <taxon>Streptococcaceae</taxon>
        <taxon>Streptococcus</taxon>
    </lineage>
</organism>
<name>FUCI_STRR6</name>
<keyword id="KW-0119">Carbohydrate metabolism</keyword>
<keyword id="KW-0963">Cytoplasm</keyword>
<keyword id="KW-0294">Fucose metabolism</keyword>
<keyword id="KW-0413">Isomerase</keyword>
<keyword id="KW-0464">Manganese</keyword>
<keyword id="KW-0479">Metal-binding</keyword>
<keyword id="KW-1185">Reference proteome</keyword>
<comment type="function">
    <text evidence="1">Converts the aldose L-fucose into the corresponding ketose L-fuculose.</text>
</comment>
<comment type="catalytic activity">
    <reaction evidence="1">
        <text>L-fucose = L-fuculose</text>
        <dbReference type="Rhea" id="RHEA:17233"/>
        <dbReference type="ChEBI" id="CHEBI:2181"/>
        <dbReference type="ChEBI" id="CHEBI:17617"/>
        <dbReference type="EC" id="5.3.1.25"/>
    </reaction>
</comment>
<comment type="cofactor">
    <cofactor evidence="1">
        <name>Mn(2+)</name>
        <dbReference type="ChEBI" id="CHEBI:29035"/>
    </cofactor>
</comment>
<comment type="pathway">
    <text evidence="1">Carbohydrate degradation; L-fucose degradation; L-lactaldehyde and glycerone phosphate from L-fucose: step 1/3.</text>
</comment>
<comment type="subcellular location">
    <subcellularLocation>
        <location evidence="1">Cytoplasm</location>
    </subcellularLocation>
</comment>
<comment type="similarity">
    <text evidence="1">Belongs to the L-fucose isomerase family.</text>
</comment>
<protein>
    <recommendedName>
        <fullName evidence="1">L-fucose isomerase</fullName>
        <ecNumber evidence="1">5.3.1.25</ecNumber>
    </recommendedName>
    <alternativeName>
        <fullName evidence="1">6-deoxy-L-galactose isomerase</fullName>
    </alternativeName>
    <alternativeName>
        <fullName>FucIase</fullName>
    </alternativeName>
</protein>
<feature type="chain" id="PRO_0000204153" description="L-fucose isomerase">
    <location>
        <begin position="1"/>
        <end position="588"/>
    </location>
</feature>
<feature type="active site" description="Proton acceptor" evidence="1">
    <location>
        <position position="335"/>
    </location>
</feature>
<feature type="active site" description="Proton acceptor" evidence="1">
    <location>
        <position position="359"/>
    </location>
</feature>
<feature type="binding site" evidence="1">
    <location>
        <position position="335"/>
    </location>
    <ligand>
        <name>Mn(2+)</name>
        <dbReference type="ChEBI" id="CHEBI:29035"/>
    </ligand>
</feature>
<feature type="binding site" evidence="1">
    <location>
        <position position="359"/>
    </location>
    <ligand>
        <name>Mn(2+)</name>
        <dbReference type="ChEBI" id="CHEBI:29035"/>
    </ligand>
</feature>
<feature type="binding site" evidence="1">
    <location>
        <position position="525"/>
    </location>
    <ligand>
        <name>Mn(2+)</name>
        <dbReference type="ChEBI" id="CHEBI:29035"/>
    </ligand>
</feature>
<reference key="1">
    <citation type="journal article" date="2001" name="J. Bacteriol.">
        <title>Genome of the bacterium Streptococcus pneumoniae strain R6.</title>
        <authorList>
            <person name="Hoskins J."/>
            <person name="Alborn W.E. Jr."/>
            <person name="Arnold J."/>
            <person name="Blaszczak L.C."/>
            <person name="Burgett S."/>
            <person name="DeHoff B.S."/>
            <person name="Estrem S.T."/>
            <person name="Fritz L."/>
            <person name="Fu D.-J."/>
            <person name="Fuller W."/>
            <person name="Geringer C."/>
            <person name="Gilmour R."/>
            <person name="Glass J.S."/>
            <person name="Khoja H."/>
            <person name="Kraft A.R."/>
            <person name="Lagace R.E."/>
            <person name="LeBlanc D.J."/>
            <person name="Lee L.N."/>
            <person name="Lefkowitz E.J."/>
            <person name="Lu J."/>
            <person name="Matsushima P."/>
            <person name="McAhren S.M."/>
            <person name="McHenney M."/>
            <person name="McLeaster K."/>
            <person name="Mundy C.W."/>
            <person name="Nicas T.I."/>
            <person name="Norris F.H."/>
            <person name="O'Gara M."/>
            <person name="Peery R.B."/>
            <person name="Robertson G.T."/>
            <person name="Rockey P."/>
            <person name="Sun P.-M."/>
            <person name="Winkler M.E."/>
            <person name="Yang Y."/>
            <person name="Young-Bellido M."/>
            <person name="Zhao G."/>
            <person name="Zook C.A."/>
            <person name="Baltz R.H."/>
            <person name="Jaskunas S.R."/>
            <person name="Rosteck P.R. Jr."/>
            <person name="Skatrud P.L."/>
            <person name="Glass J.I."/>
        </authorList>
    </citation>
    <scope>NUCLEOTIDE SEQUENCE [LARGE SCALE GENOMIC DNA]</scope>
    <source>
        <strain>ATCC BAA-255 / R6</strain>
    </source>
</reference>
<dbReference type="EC" id="5.3.1.25" evidence="1"/>
<dbReference type="EMBL" id="AE007317">
    <property type="protein sequence ID" value="AAL00766.1"/>
    <property type="molecule type" value="Genomic_DNA"/>
</dbReference>
<dbReference type="PIR" id="A99717">
    <property type="entry name" value="A99717"/>
</dbReference>
<dbReference type="RefSeq" id="NP_359555.1">
    <property type="nucleotide sequence ID" value="NC_003098.1"/>
</dbReference>
<dbReference type="RefSeq" id="WP_000614258.1">
    <property type="nucleotide sequence ID" value="NC_003098.1"/>
</dbReference>
<dbReference type="SMR" id="Q8DN24"/>
<dbReference type="STRING" id="171101.spr1964"/>
<dbReference type="KEGG" id="spr:spr1964"/>
<dbReference type="PATRIC" id="fig|171101.6.peg.2127"/>
<dbReference type="eggNOG" id="COG2407">
    <property type="taxonomic scope" value="Bacteria"/>
</dbReference>
<dbReference type="HOGENOM" id="CLU_033326_1_0_9"/>
<dbReference type="UniPathway" id="UPA00563">
    <property type="reaction ID" value="UER00624"/>
</dbReference>
<dbReference type="Proteomes" id="UP000000586">
    <property type="component" value="Chromosome"/>
</dbReference>
<dbReference type="GO" id="GO:0005737">
    <property type="term" value="C:cytoplasm"/>
    <property type="evidence" value="ECO:0007669"/>
    <property type="project" value="UniProtKB-SubCell"/>
</dbReference>
<dbReference type="GO" id="GO:0008790">
    <property type="term" value="F:arabinose isomerase activity"/>
    <property type="evidence" value="ECO:0000318"/>
    <property type="project" value="GO_Central"/>
</dbReference>
<dbReference type="GO" id="GO:0008736">
    <property type="term" value="F:L-fucose isomerase activity"/>
    <property type="evidence" value="ECO:0000318"/>
    <property type="project" value="GO_Central"/>
</dbReference>
<dbReference type="GO" id="GO:0030145">
    <property type="term" value="F:manganese ion binding"/>
    <property type="evidence" value="ECO:0007669"/>
    <property type="project" value="UniProtKB-UniRule"/>
</dbReference>
<dbReference type="GO" id="GO:0019571">
    <property type="term" value="P:D-arabinose catabolic process"/>
    <property type="evidence" value="ECO:0000318"/>
    <property type="project" value="GO_Central"/>
</dbReference>
<dbReference type="GO" id="GO:0042355">
    <property type="term" value="P:L-fucose catabolic process"/>
    <property type="evidence" value="ECO:0000318"/>
    <property type="project" value="GO_Central"/>
</dbReference>
<dbReference type="CDD" id="cd03556">
    <property type="entry name" value="L-fucose_isomerase"/>
    <property type="match status" value="1"/>
</dbReference>
<dbReference type="FunFam" id="3.20.14.10:FF:000001">
    <property type="entry name" value="L-fucose isomerase"/>
    <property type="match status" value="1"/>
</dbReference>
<dbReference type="FunFam" id="3.40.50.1070:FF:000001">
    <property type="entry name" value="L-fucose isomerase"/>
    <property type="match status" value="1"/>
</dbReference>
<dbReference type="Gene3D" id="3.40.50.1070">
    <property type="match status" value="1"/>
</dbReference>
<dbReference type="Gene3D" id="3.40.275.10">
    <property type="entry name" value="L-fucose Isomerase, Chain A, domain 2"/>
    <property type="match status" value="1"/>
</dbReference>
<dbReference type="Gene3D" id="3.20.14.10">
    <property type="entry name" value="L-fucose/L-arabinose isomerase, C-terminal"/>
    <property type="match status" value="1"/>
</dbReference>
<dbReference type="HAMAP" id="MF_01254">
    <property type="entry name" value="Fucose_iso"/>
    <property type="match status" value="1"/>
</dbReference>
<dbReference type="InterPro" id="IPR004216">
    <property type="entry name" value="Fuc/Ara_isomerase_C"/>
</dbReference>
<dbReference type="InterPro" id="IPR038393">
    <property type="entry name" value="Fuc_iso_dom3_sf"/>
</dbReference>
<dbReference type="InterPro" id="IPR015888">
    <property type="entry name" value="Fuc_isomerase_C"/>
</dbReference>
<dbReference type="InterPro" id="IPR038391">
    <property type="entry name" value="Fucose_iso_dom1_sf"/>
</dbReference>
<dbReference type="InterPro" id="IPR012888">
    <property type="entry name" value="Fucose_iso_N1"/>
</dbReference>
<dbReference type="InterPro" id="IPR005763">
    <property type="entry name" value="Fucose_isomerase"/>
</dbReference>
<dbReference type="InterPro" id="IPR038392">
    <property type="entry name" value="Fucose_isomerase_dom2_sf"/>
</dbReference>
<dbReference type="InterPro" id="IPR009015">
    <property type="entry name" value="Fucose_isomerase_N/cen_sf"/>
</dbReference>
<dbReference type="InterPro" id="IPR012889">
    <property type="entry name" value="Fucose_isomerase_N2"/>
</dbReference>
<dbReference type="NCBIfam" id="TIGR01089">
    <property type="entry name" value="fucI"/>
    <property type="match status" value="1"/>
</dbReference>
<dbReference type="NCBIfam" id="NF008220">
    <property type="entry name" value="PRK10991.1"/>
    <property type="match status" value="1"/>
</dbReference>
<dbReference type="PANTHER" id="PTHR37840">
    <property type="entry name" value="L-FUCOSE ISOMERASE"/>
    <property type="match status" value="1"/>
</dbReference>
<dbReference type="PANTHER" id="PTHR37840:SF1">
    <property type="entry name" value="L-FUCOSE ISOMERASE"/>
    <property type="match status" value="1"/>
</dbReference>
<dbReference type="Pfam" id="PF02952">
    <property type="entry name" value="Fucose_iso_C"/>
    <property type="match status" value="1"/>
</dbReference>
<dbReference type="Pfam" id="PF07881">
    <property type="entry name" value="Fucose_iso_N1"/>
    <property type="match status" value="1"/>
</dbReference>
<dbReference type="Pfam" id="PF07882">
    <property type="entry name" value="Fucose_iso_N2"/>
    <property type="match status" value="1"/>
</dbReference>
<dbReference type="SUPFAM" id="SSF50443">
    <property type="entry name" value="FucI/AraA C-terminal domain-like"/>
    <property type="match status" value="1"/>
</dbReference>
<dbReference type="SUPFAM" id="SSF53743">
    <property type="entry name" value="FucI/AraA N-terminal and middle domains"/>
    <property type="match status" value="1"/>
</dbReference>
<proteinExistence type="inferred from homology"/>
<evidence type="ECO:0000255" key="1">
    <source>
        <dbReference type="HAMAP-Rule" id="MF_01254"/>
    </source>
</evidence>